<sequence length="115" mass="13138">MKFVLLFGVLLVALFSYSSAEMLDDFGQADEDELLSLIEKEEARAKECTPRFYDCSHDRHSCCRSELFKDVCTCFYPEGGDNEVCTCQQPKHLKYMEKAAGKAKKFGGKIKKWFG</sequence>
<name>TX329_LYCSI</name>
<keyword id="KW-1015">Disulfide bond</keyword>
<keyword id="KW-0960">Knottin</keyword>
<keyword id="KW-0964">Secreted</keyword>
<keyword id="KW-0732">Signal</keyword>
<keyword id="KW-0800">Toxin</keyword>
<comment type="subcellular location">
    <subcellularLocation>
        <location evidence="1">Secreted</location>
    </subcellularLocation>
</comment>
<comment type="tissue specificity">
    <text>Expressed by the venom gland.</text>
</comment>
<comment type="domain">
    <text evidence="1">The presence of a 'disulfide through disulfide knot' structurally defines this protein as a knottin.</text>
</comment>
<comment type="similarity">
    <text evidence="3">Belongs to the neurotoxin 19 (CSTX) family. 01 subfamily.</text>
</comment>
<evidence type="ECO:0000250" key="1"/>
<evidence type="ECO:0000255" key="2"/>
<evidence type="ECO:0000305" key="3"/>
<reference key="1">
    <citation type="journal article" date="2010" name="Zoology">
        <title>Transcriptome analysis of the venom glands of the Chinese wolf spider Lycosa singoriensis.</title>
        <authorList>
            <person name="Zhang Y."/>
            <person name="Chen J."/>
            <person name="Tang X."/>
            <person name="Wang F."/>
            <person name="Jiang L."/>
            <person name="Xiong X."/>
            <person name="Wang M."/>
            <person name="Rong M."/>
            <person name="Liu Z."/>
            <person name="Liang S."/>
        </authorList>
    </citation>
    <scope>NUCLEOTIDE SEQUENCE [LARGE SCALE MRNA]</scope>
    <source>
        <tissue>Venom gland</tissue>
    </source>
</reference>
<protein>
    <recommendedName>
        <fullName>U3-lycotoxin-Ls1k</fullName>
    </recommendedName>
    <alternativeName>
        <fullName>Toxin-like structure LSTX-B29</fullName>
    </alternativeName>
</protein>
<proteinExistence type="evidence at transcript level"/>
<organism>
    <name type="scientific">Lycosa singoriensis</name>
    <name type="common">Wolf spider</name>
    <name type="synonym">Aranea singoriensis</name>
    <dbReference type="NCBI Taxonomy" id="434756"/>
    <lineage>
        <taxon>Eukaryota</taxon>
        <taxon>Metazoa</taxon>
        <taxon>Ecdysozoa</taxon>
        <taxon>Arthropoda</taxon>
        <taxon>Chelicerata</taxon>
        <taxon>Arachnida</taxon>
        <taxon>Araneae</taxon>
        <taxon>Araneomorphae</taxon>
        <taxon>Entelegynae</taxon>
        <taxon>Lycosoidea</taxon>
        <taxon>Lycosidae</taxon>
        <taxon>Lycosa</taxon>
    </lineage>
</organism>
<feature type="signal peptide" evidence="2">
    <location>
        <begin position="1"/>
        <end position="20"/>
    </location>
</feature>
<feature type="propeptide" id="PRO_0000401661" evidence="1">
    <location>
        <begin position="21"/>
        <end position="44"/>
    </location>
</feature>
<feature type="chain" id="PRO_0000401662" description="U3-lycotoxin-Ls1k">
    <location>
        <begin position="45"/>
        <end position="115"/>
    </location>
</feature>
<feature type="disulfide bond" evidence="1">
    <location>
        <begin position="48"/>
        <end position="63"/>
    </location>
</feature>
<feature type="disulfide bond" evidence="1">
    <location>
        <begin position="55"/>
        <end position="72"/>
    </location>
</feature>
<feature type="disulfide bond" evidence="1">
    <location>
        <begin position="62"/>
        <end position="87"/>
    </location>
</feature>
<feature type="disulfide bond" evidence="1">
    <location>
        <begin position="74"/>
        <end position="85"/>
    </location>
</feature>
<dbReference type="EMBL" id="EU926008">
    <property type="protein sequence ID" value="ACI41340.1"/>
    <property type="molecule type" value="mRNA"/>
</dbReference>
<dbReference type="EMBL" id="FM864012">
    <property type="protein sequence ID" value="CAS03610.1"/>
    <property type="molecule type" value="mRNA"/>
</dbReference>
<dbReference type="SMR" id="B6DCS4"/>
<dbReference type="ArachnoServer" id="AS000953">
    <property type="toxin name" value="U3-lycotoxin-Ls1k"/>
</dbReference>
<dbReference type="GO" id="GO:0005576">
    <property type="term" value="C:extracellular region"/>
    <property type="evidence" value="ECO:0007669"/>
    <property type="project" value="UniProtKB-SubCell"/>
</dbReference>
<dbReference type="GO" id="GO:0090729">
    <property type="term" value="F:toxin activity"/>
    <property type="evidence" value="ECO:0007669"/>
    <property type="project" value="UniProtKB-KW"/>
</dbReference>
<dbReference type="InterPro" id="IPR019553">
    <property type="entry name" value="Spider_toxin_CSTX_knottin"/>
</dbReference>
<dbReference type="InterPro" id="IPR011142">
    <property type="entry name" value="Spider_toxin_CSTX_Knottin_CS"/>
</dbReference>
<dbReference type="Pfam" id="PF10530">
    <property type="entry name" value="Toxin_35"/>
    <property type="match status" value="1"/>
</dbReference>
<dbReference type="PROSITE" id="PS60029">
    <property type="entry name" value="SPIDER_CSTX"/>
    <property type="match status" value="1"/>
</dbReference>
<accession>B6DCS4</accession>